<reference key="1">
    <citation type="journal article" date="2009" name="PLoS Genet.">
        <title>Organised genome dynamics in the Escherichia coli species results in highly diverse adaptive paths.</title>
        <authorList>
            <person name="Touchon M."/>
            <person name="Hoede C."/>
            <person name="Tenaillon O."/>
            <person name="Barbe V."/>
            <person name="Baeriswyl S."/>
            <person name="Bidet P."/>
            <person name="Bingen E."/>
            <person name="Bonacorsi S."/>
            <person name="Bouchier C."/>
            <person name="Bouvet O."/>
            <person name="Calteau A."/>
            <person name="Chiapello H."/>
            <person name="Clermont O."/>
            <person name="Cruveiller S."/>
            <person name="Danchin A."/>
            <person name="Diard M."/>
            <person name="Dossat C."/>
            <person name="Karoui M.E."/>
            <person name="Frapy E."/>
            <person name="Garry L."/>
            <person name="Ghigo J.M."/>
            <person name="Gilles A.M."/>
            <person name="Johnson J."/>
            <person name="Le Bouguenec C."/>
            <person name="Lescat M."/>
            <person name="Mangenot S."/>
            <person name="Martinez-Jehanne V."/>
            <person name="Matic I."/>
            <person name="Nassif X."/>
            <person name="Oztas S."/>
            <person name="Petit M.A."/>
            <person name="Pichon C."/>
            <person name="Rouy Z."/>
            <person name="Ruf C.S."/>
            <person name="Schneider D."/>
            <person name="Tourret J."/>
            <person name="Vacherie B."/>
            <person name="Vallenet D."/>
            <person name="Medigue C."/>
            <person name="Rocha E.P.C."/>
            <person name="Denamur E."/>
        </authorList>
    </citation>
    <scope>NUCLEOTIDE SEQUENCE [LARGE SCALE GENOMIC DNA]</scope>
    <source>
        <strain>S88 / ExPEC</strain>
    </source>
</reference>
<comment type="function">
    <text evidence="1">Plays an essential role in the initiation and regulation of chromosomal replication. ATP-DnaA binds to the origin of replication (oriC) to initiate formation of the DNA replication initiation complex once per cell cycle. Binds the DnaA box (a 9 base pair repeat at the origin) and separates the double-stranded (ds)DNA. Forms a right-handed helical filament on oriC DNA; dsDNA binds to the exterior of the filament while single-stranded (ss)DNA is stabiized in the filament's interior. The ATP-DnaA-oriC complex binds and stabilizes one strand of the AT-rich DNA unwinding element (DUE), permitting loading of DNA polymerase. After initiation quickly degrades to an ADP-DnaA complex that is not apt for DNA replication. Binds acidic phospholipids.</text>
</comment>
<comment type="subunit">
    <text evidence="1">Oligomerizes as a right-handed, spiral filament on DNA at oriC.</text>
</comment>
<comment type="subcellular location">
    <subcellularLocation>
        <location evidence="1">Cytoplasm</location>
    </subcellularLocation>
</comment>
<comment type="domain">
    <text evidence="1">Domain I is involved in oligomerization and binding regulators, domain II is flexibile and of varying length in different bacteria, domain III forms the AAA+ region, while domain IV binds dsDNA.</text>
</comment>
<comment type="similarity">
    <text evidence="1">Belongs to the DnaA family.</text>
</comment>
<name>DNAA_ECO45</name>
<keyword id="KW-0067">ATP-binding</keyword>
<keyword id="KW-0963">Cytoplasm</keyword>
<keyword id="KW-0235">DNA replication</keyword>
<keyword id="KW-0238">DNA-binding</keyword>
<keyword id="KW-0446">Lipid-binding</keyword>
<keyword id="KW-0547">Nucleotide-binding</keyword>
<keyword id="KW-1185">Reference proteome</keyword>
<feature type="chain" id="PRO_1000121973" description="Chromosomal replication initiator protein DnaA">
    <location>
        <begin position="1"/>
        <end position="467"/>
    </location>
</feature>
<feature type="region of interest" description="Domain I, interacts with DnaA modulators" evidence="1">
    <location>
        <begin position="1"/>
        <end position="90"/>
    </location>
</feature>
<feature type="region of interest" description="Domain II" evidence="1">
    <location>
        <begin position="91"/>
        <end position="130"/>
    </location>
</feature>
<feature type="region of interest" description="Disordered" evidence="2">
    <location>
        <begin position="98"/>
        <end position="119"/>
    </location>
</feature>
<feature type="region of interest" description="Domain III, AAA+ region" evidence="1">
    <location>
        <begin position="131"/>
        <end position="347"/>
    </location>
</feature>
<feature type="region of interest" description="Domain IV, binds dsDNA" evidence="1">
    <location>
        <begin position="348"/>
        <end position="467"/>
    </location>
</feature>
<feature type="compositionally biased region" description="Low complexity" evidence="2">
    <location>
        <begin position="98"/>
        <end position="111"/>
    </location>
</feature>
<feature type="binding site" evidence="1">
    <location>
        <position position="175"/>
    </location>
    <ligand>
        <name>ATP</name>
        <dbReference type="ChEBI" id="CHEBI:30616"/>
    </ligand>
</feature>
<feature type="binding site" evidence="1">
    <location>
        <position position="177"/>
    </location>
    <ligand>
        <name>ATP</name>
        <dbReference type="ChEBI" id="CHEBI:30616"/>
    </ligand>
</feature>
<feature type="binding site" evidence="1">
    <location>
        <position position="178"/>
    </location>
    <ligand>
        <name>ATP</name>
        <dbReference type="ChEBI" id="CHEBI:30616"/>
    </ligand>
</feature>
<feature type="binding site" evidence="1">
    <location>
        <position position="179"/>
    </location>
    <ligand>
        <name>ATP</name>
        <dbReference type="ChEBI" id="CHEBI:30616"/>
    </ligand>
</feature>
<gene>
    <name evidence="1" type="primary">dnaA</name>
    <name type="ordered locus">ECS88_4125</name>
</gene>
<sequence>MSLSLWQQCLARLQDELPATEFSMWIRPLQAELSDNTLALYAPNRFVLDWVRDKYLNNINGLLTSFCGADAPQLRFEVGTKPVTQTPQAAVTSNVAAPAQVAQTQPQRAAPSTRSGWDNVPAPAEPTYRSNVNVKHTFDNFVEGKSNQLARAAARQVADNPGGAYNPLFLYGGTGLGKTHLLHAVGNGIMARKPNAKVVYMHSERFVQDMVKALQNNAIEEFKRYYRSVDALLIDDIQFFANKERSQEEFFHTFNALLEGNQQIILTSDRYPKEINGVEDRLKSRFGWGLTVAIEPPELETRVAILMKKADENDIRLPGEVAFFIAKRLRSNVRELEGALNRVIANANFTGRAITIDFVREALRDLLALQEKLVTIDNIQKTVAEYYKIKVADLLSKRRSRSVARPRQMAMALAKELTNHSLPEIGDAFGGRDHTTVLHACRKIEQLREESHDIKEDFSNLIRTLSS</sequence>
<proteinExistence type="inferred from homology"/>
<accession>B7MGC3</accession>
<dbReference type="EMBL" id="CU928161">
    <property type="protein sequence ID" value="CAR05331.1"/>
    <property type="molecule type" value="Genomic_DNA"/>
</dbReference>
<dbReference type="RefSeq" id="WP_000059111.1">
    <property type="nucleotide sequence ID" value="NC_011742.1"/>
</dbReference>
<dbReference type="SMR" id="B7MGC3"/>
<dbReference type="GeneID" id="93778443"/>
<dbReference type="KEGG" id="ecz:ECS88_4125"/>
<dbReference type="HOGENOM" id="CLU_026910_0_1_6"/>
<dbReference type="Proteomes" id="UP000000747">
    <property type="component" value="Chromosome"/>
</dbReference>
<dbReference type="GO" id="GO:0005737">
    <property type="term" value="C:cytoplasm"/>
    <property type="evidence" value="ECO:0007669"/>
    <property type="project" value="UniProtKB-SubCell"/>
</dbReference>
<dbReference type="GO" id="GO:0005886">
    <property type="term" value="C:plasma membrane"/>
    <property type="evidence" value="ECO:0007669"/>
    <property type="project" value="TreeGrafter"/>
</dbReference>
<dbReference type="GO" id="GO:0005524">
    <property type="term" value="F:ATP binding"/>
    <property type="evidence" value="ECO:0007669"/>
    <property type="project" value="UniProtKB-UniRule"/>
</dbReference>
<dbReference type="GO" id="GO:0016887">
    <property type="term" value="F:ATP hydrolysis activity"/>
    <property type="evidence" value="ECO:0007669"/>
    <property type="project" value="InterPro"/>
</dbReference>
<dbReference type="GO" id="GO:0003688">
    <property type="term" value="F:DNA replication origin binding"/>
    <property type="evidence" value="ECO:0007669"/>
    <property type="project" value="UniProtKB-UniRule"/>
</dbReference>
<dbReference type="GO" id="GO:0008289">
    <property type="term" value="F:lipid binding"/>
    <property type="evidence" value="ECO:0007669"/>
    <property type="project" value="UniProtKB-KW"/>
</dbReference>
<dbReference type="GO" id="GO:0006270">
    <property type="term" value="P:DNA replication initiation"/>
    <property type="evidence" value="ECO:0007669"/>
    <property type="project" value="UniProtKB-UniRule"/>
</dbReference>
<dbReference type="GO" id="GO:0006275">
    <property type="term" value="P:regulation of DNA replication"/>
    <property type="evidence" value="ECO:0007669"/>
    <property type="project" value="UniProtKB-UniRule"/>
</dbReference>
<dbReference type="CDD" id="cd00009">
    <property type="entry name" value="AAA"/>
    <property type="match status" value="1"/>
</dbReference>
<dbReference type="CDD" id="cd06571">
    <property type="entry name" value="Bac_DnaA_C"/>
    <property type="match status" value="1"/>
</dbReference>
<dbReference type="FunFam" id="1.10.1750.10:FF:000001">
    <property type="entry name" value="Chromosomal replication initiator protein DnaA"/>
    <property type="match status" value="1"/>
</dbReference>
<dbReference type="FunFam" id="1.10.8.60:FF:000003">
    <property type="entry name" value="Chromosomal replication initiator protein DnaA"/>
    <property type="match status" value="1"/>
</dbReference>
<dbReference type="FunFam" id="3.30.300.180:FF:000001">
    <property type="entry name" value="Chromosomal replication initiator protein DnaA"/>
    <property type="match status" value="1"/>
</dbReference>
<dbReference type="FunFam" id="3.40.50.300:FF:000103">
    <property type="entry name" value="Chromosomal replication initiator protein DnaA"/>
    <property type="match status" value="1"/>
</dbReference>
<dbReference type="Gene3D" id="1.10.1750.10">
    <property type="match status" value="1"/>
</dbReference>
<dbReference type="Gene3D" id="1.10.8.60">
    <property type="match status" value="1"/>
</dbReference>
<dbReference type="Gene3D" id="3.30.300.180">
    <property type="match status" value="1"/>
</dbReference>
<dbReference type="Gene3D" id="3.40.50.300">
    <property type="entry name" value="P-loop containing nucleotide triphosphate hydrolases"/>
    <property type="match status" value="1"/>
</dbReference>
<dbReference type="HAMAP" id="MF_00377">
    <property type="entry name" value="DnaA_bact"/>
    <property type="match status" value="1"/>
</dbReference>
<dbReference type="InterPro" id="IPR003593">
    <property type="entry name" value="AAA+_ATPase"/>
</dbReference>
<dbReference type="InterPro" id="IPR001957">
    <property type="entry name" value="Chromosome_initiator_DnaA"/>
</dbReference>
<dbReference type="InterPro" id="IPR020591">
    <property type="entry name" value="Chromosome_initiator_DnaA-like"/>
</dbReference>
<dbReference type="InterPro" id="IPR018312">
    <property type="entry name" value="Chromosome_initiator_DnaA_CS"/>
</dbReference>
<dbReference type="InterPro" id="IPR013159">
    <property type="entry name" value="DnaA_C"/>
</dbReference>
<dbReference type="InterPro" id="IPR013317">
    <property type="entry name" value="DnaA_dom"/>
</dbReference>
<dbReference type="InterPro" id="IPR024633">
    <property type="entry name" value="DnaA_N_dom"/>
</dbReference>
<dbReference type="InterPro" id="IPR038454">
    <property type="entry name" value="DnaA_N_sf"/>
</dbReference>
<dbReference type="InterPro" id="IPR027417">
    <property type="entry name" value="P-loop_NTPase"/>
</dbReference>
<dbReference type="InterPro" id="IPR010921">
    <property type="entry name" value="Trp_repressor/repl_initiator"/>
</dbReference>
<dbReference type="NCBIfam" id="TIGR00362">
    <property type="entry name" value="DnaA"/>
    <property type="match status" value="1"/>
</dbReference>
<dbReference type="PANTHER" id="PTHR30050">
    <property type="entry name" value="CHROMOSOMAL REPLICATION INITIATOR PROTEIN DNAA"/>
    <property type="match status" value="1"/>
</dbReference>
<dbReference type="PANTHER" id="PTHR30050:SF2">
    <property type="entry name" value="CHROMOSOMAL REPLICATION INITIATOR PROTEIN DNAA"/>
    <property type="match status" value="1"/>
</dbReference>
<dbReference type="Pfam" id="PF00308">
    <property type="entry name" value="Bac_DnaA"/>
    <property type="match status" value="1"/>
</dbReference>
<dbReference type="Pfam" id="PF08299">
    <property type="entry name" value="Bac_DnaA_C"/>
    <property type="match status" value="1"/>
</dbReference>
<dbReference type="Pfam" id="PF11638">
    <property type="entry name" value="DnaA_N"/>
    <property type="match status" value="1"/>
</dbReference>
<dbReference type="PRINTS" id="PR00051">
    <property type="entry name" value="DNAA"/>
</dbReference>
<dbReference type="SMART" id="SM00382">
    <property type="entry name" value="AAA"/>
    <property type="match status" value="1"/>
</dbReference>
<dbReference type="SMART" id="SM00760">
    <property type="entry name" value="Bac_DnaA_C"/>
    <property type="match status" value="1"/>
</dbReference>
<dbReference type="SUPFAM" id="SSF52540">
    <property type="entry name" value="P-loop containing nucleoside triphosphate hydrolases"/>
    <property type="match status" value="1"/>
</dbReference>
<dbReference type="SUPFAM" id="SSF48295">
    <property type="entry name" value="TrpR-like"/>
    <property type="match status" value="1"/>
</dbReference>
<dbReference type="PROSITE" id="PS01008">
    <property type="entry name" value="DNAA"/>
    <property type="match status" value="1"/>
</dbReference>
<evidence type="ECO:0000255" key="1">
    <source>
        <dbReference type="HAMAP-Rule" id="MF_00377"/>
    </source>
</evidence>
<evidence type="ECO:0000256" key="2">
    <source>
        <dbReference type="SAM" id="MobiDB-lite"/>
    </source>
</evidence>
<protein>
    <recommendedName>
        <fullName evidence="1">Chromosomal replication initiator protein DnaA</fullName>
    </recommendedName>
</protein>
<organism>
    <name type="scientific">Escherichia coli O45:K1 (strain S88 / ExPEC)</name>
    <dbReference type="NCBI Taxonomy" id="585035"/>
    <lineage>
        <taxon>Bacteria</taxon>
        <taxon>Pseudomonadati</taxon>
        <taxon>Pseudomonadota</taxon>
        <taxon>Gammaproteobacteria</taxon>
        <taxon>Enterobacterales</taxon>
        <taxon>Enterobacteriaceae</taxon>
        <taxon>Escherichia</taxon>
    </lineage>
</organism>